<protein>
    <recommendedName>
        <fullName evidence="5">Protein SWEETIE</fullName>
    </recommendedName>
</protein>
<name>SWTIE_ARATH</name>
<evidence type="ECO:0000255" key="1"/>
<evidence type="ECO:0000256" key="2">
    <source>
        <dbReference type="SAM" id="MobiDB-lite"/>
    </source>
</evidence>
<evidence type="ECO:0000269" key="3">
    <source>
    </source>
</evidence>
<evidence type="ECO:0000269" key="4">
    <source>
    </source>
</evidence>
<evidence type="ECO:0000303" key="5">
    <source>
    </source>
</evidence>
<evidence type="ECO:0000305" key="6"/>
<evidence type="ECO:0000312" key="7">
    <source>
        <dbReference type="Araport" id="AT1G67140"/>
    </source>
</evidence>
<evidence type="ECO:0000312" key="8">
    <source>
        <dbReference type="EMBL" id="AAD10656.1"/>
    </source>
</evidence>
<sequence length="2222" mass="244381">MTKNIASDNVPLSRFGVLVAQLESIVASASQKNPDPLLCFEILSDLISAIDEEPKESLLVTQRKCEDALYSLVTLGARRPVRHLASVAMAKIISNGDSISIYSRASSLQGFLSDGKRSDPQRVAGAAQCLGELYRHFGKKITSGLFETTSIVTKLVKFNEDFVRQEAFILLHNALEGCGGTAAATAYSEAYRLITRFSTLDKSFVVRIAAARCLKAFSNIGGPGLGTSEFDTLASYCVKGIEDSESSVRDAFAEALGSLLALGMHPEAHVQPRGKGPFPPAKKLEGGLQRHLILPFTKAVGSRAKNTRFGLALSWVFFLQAIRIRYLDSDSELQDYSLPIMDMLRGDSSIDAHALACVLYILRVGVIDQMMEPSQRSFSVFLGKQLQSSNASPSMKIVALRALSYTLKTLGEVPHEFKEFFDDTVGAALSHFLDLVRVEAALTLRALAEVDPTCVGGLTSFAVTTLNALRESLSFEKGDKLKTDLASLHGQAATLAALVSISPGLSLGYPARLPRSVLEVSKKMLTESRRNVTVASSEKEAGWLLLSSLLNSMPKEEFGDQDFDILILWTDVFAGNPEHLIKQQAELKSMLSVWSAAIDALTAFVRRFVSCNDGILLQPVLANLRSALSCVSTMANKRFSDVKTLVDILIIRILIAYQSIPDPLAYKSEHQQIIQLCTTPYRDPSGFEESSCLKSLLDKRDAWLGPWIPGRDWFEDELRYFQGGEDGLAPSVWESKVSSFPLPETVKKTLVNQMVLCFGIMFASQDSQGMLSLLSVIQQCLKAGKKQQWRTASLTNICAGLLAGLKALHALRPQQLTTEVLSSGQAIFQNILTEGDICASQRRAACEGLGLLARLGNDIFTARMTRVLLGDLSGVTDPNYGGSIALALGCIHHSAGGMALSSLVPATVNSVSSLTKTSVLGLKIWALHGLLLTIEAAGLSFVSHVQAALGLALDILLTEESGWIDLSQGIGRLINAIVAVLGPELSPGSILFSRCKSVIAEISSWQEIPTLLESVCFTQQLILFAPQAVSVHIHVKNLLMTLASRQPIIRRLSVSTLRHLVEKDPVSVIDEQIEDNLFQMLDEETDSEIGNLIRSTLIRLLYATCPSRPSRWMLICRNMALAASAGRSAETSIAENDPAYTRENLGDDDEDMVSSSSGKSIRANPDKDKTLRYRTRVFAAECLSLLPEAVGNDAAHFDILLARNLASNRQSSGDWLVLQLQELISLAYQISTIQFENMRPIGVGLLSTILEKFKLVADPELPGHLLLEQYQAQLLSAVRTALDANSGPVLLEAGLQLATKIMTSGIIRSDQVAVKRIFSLLSRPLNDFNELYYPSFAEWVTSKIKIRLLAAHASLKCYIFTFLRKHHGEVPVEFEALLPMFSKSSDLLGRYWIQVLKGYSYICLCQNLKKSQCSFLDEILPHTVSRRLQPCLEEAWPVILQALVLDAIPVNHSVEEFSDRSLISTHRMVTLEAEDFQFLWGFAVLVLFQGMHPASSMQVIPFSSAKIKSSGDSSINESSFQGLKLYEIALPVFQSLSAGRFFSSGFLSIDLCQELLQVLSYSFHMDSSWDILAVSVVQQISQNCPKDFLESEEFAYSTIELCLGYLFKILHRHNEISPDDGIWDNMLSPLFISIKTLVKRFELKHRLNSAPLAFLLSGYKCIRQVPTDAYLPKALEIVKSTNDLLLELTRASSQKPYTDGTNFAADSGFHLRAIFGACLHMVGDLTRDCINGIQLVDSKRSGLRKLLQLKLVFCLEQLFSLAKLAYEFDCPVDETNTNSICIVMLKSCQISIAAVVKDSNVQVQATVLQVLKSLVQRYNNPEEKSFVILFVGELIGDIVSLMQRALLKPVNTESVVIAGECLRFIMLLQTHSITDELQKGFMSLFLEVVLVVFSKTSDGVSQEVLELRNVAVRLVSHLAQLPSSAVHFKDVLLSLPVTHRQQLQDIIRASVSKDSALAKPKSLVPAMDIKLPAPVVATPEKVTSTANMVKEEALSTMPTSFNQVSTVESGTDEEEEEEEDDDDDDWDTFQSFPASTNLEGSESKTESVAEEEPDLPGRSSIQDDESNAEETDDQHLASDHATDITREDSNDKSKEVVEEETVEPCFTTREDSVDKSKEVEEETVKPCLIEDALTSQNDKTSSGDHPVEINEQSVESKNLESENIGTDIKLASTEVESPALDDLEPQQIQKSPEDESSKEHVGADVIVTEETIAENKSDVDYI</sequence>
<comment type="function">
    <text evidence="3 4">May regulate multiple metabolic, hormonal and stress-related pathways. Required for carbohydrate metabolism and homoeostasis. May also monitor ethylene biosynthesis and senescence.</text>
</comment>
<comment type="alternative products">
    <event type="alternative splicing"/>
    <isoform>
        <id>F4HRS2-1</id>
        <name>1</name>
        <sequence type="displayed"/>
    </isoform>
    <isoform>
        <id>F4HRS2-2</id>
        <name>2</name>
        <sequence type="described" ref="VSP_058998 VSP_058999"/>
    </isoform>
    <isoform>
        <id>F4HRS2-3</id>
        <name>3</name>
        <sequence type="described" ref="VSP_058998"/>
    </isoform>
</comment>
<comment type="disruption phenotype">
    <text evidence="3 4">Drastically altered morphogenesis, growth and development, including severe dwarfism, lancet-shaped leaves, early senescence and flower sterility. Strongly modified carbohydrate metabolism leading to increased accumulation of endogenous sugars (e.g. trehalose, trehalose-6-phosphate and starch). Ethylene over-production. Up-regulation of genes involved in sugar metabolism, senescence, ethylene biosynthesis and abiotic stress. In light, hypersensitivity to sucrose and glucose during vegetative growth, with partial phenotypic reversion in the presence of high sorbitol concentrations. Altered sugar-mediated hypocotyl elongation response in the dark.</text>
</comment>
<comment type="similarity">
    <text evidence="6">Belongs to the HEATR5 family.</text>
</comment>
<comment type="sequence caution" evidence="6">
    <conflict type="erroneous gene model prediction">
        <sequence resource="EMBL-CDS" id="AAD10656"/>
    </conflict>
</comment>
<gene>
    <name evidence="5" type="primary">SWEETIE</name>
    <name evidence="7" type="ordered locus">At1g67140</name>
    <name evidence="8" type="ORF">F5A8.5</name>
</gene>
<organism>
    <name type="scientific">Arabidopsis thaliana</name>
    <name type="common">Mouse-ear cress</name>
    <dbReference type="NCBI Taxonomy" id="3702"/>
    <lineage>
        <taxon>Eukaryota</taxon>
        <taxon>Viridiplantae</taxon>
        <taxon>Streptophyta</taxon>
        <taxon>Embryophyta</taxon>
        <taxon>Tracheophyta</taxon>
        <taxon>Spermatophyta</taxon>
        <taxon>Magnoliopsida</taxon>
        <taxon>eudicotyledons</taxon>
        <taxon>Gunneridae</taxon>
        <taxon>Pentapetalae</taxon>
        <taxon>rosids</taxon>
        <taxon>malvids</taxon>
        <taxon>Brassicales</taxon>
        <taxon>Brassicaceae</taxon>
        <taxon>Camelineae</taxon>
        <taxon>Arabidopsis</taxon>
    </lineage>
</organism>
<reference key="1">
    <citation type="journal article" date="2000" name="Nature">
        <title>Sequence and analysis of chromosome 1 of the plant Arabidopsis thaliana.</title>
        <authorList>
            <person name="Theologis A."/>
            <person name="Ecker J.R."/>
            <person name="Palm C.J."/>
            <person name="Federspiel N.A."/>
            <person name="Kaul S."/>
            <person name="White O."/>
            <person name="Alonso J."/>
            <person name="Altafi H."/>
            <person name="Araujo R."/>
            <person name="Bowman C.L."/>
            <person name="Brooks S.Y."/>
            <person name="Buehler E."/>
            <person name="Chan A."/>
            <person name="Chao Q."/>
            <person name="Chen H."/>
            <person name="Cheuk R.F."/>
            <person name="Chin C.W."/>
            <person name="Chung M.K."/>
            <person name="Conn L."/>
            <person name="Conway A.B."/>
            <person name="Conway A.R."/>
            <person name="Creasy T.H."/>
            <person name="Dewar K."/>
            <person name="Dunn P."/>
            <person name="Etgu P."/>
            <person name="Feldblyum T.V."/>
            <person name="Feng J.-D."/>
            <person name="Fong B."/>
            <person name="Fujii C.Y."/>
            <person name="Gill J.E."/>
            <person name="Goldsmith A.D."/>
            <person name="Haas B."/>
            <person name="Hansen N.F."/>
            <person name="Hughes B."/>
            <person name="Huizar L."/>
            <person name="Hunter J.L."/>
            <person name="Jenkins J."/>
            <person name="Johnson-Hopson C."/>
            <person name="Khan S."/>
            <person name="Khaykin E."/>
            <person name="Kim C.J."/>
            <person name="Koo H.L."/>
            <person name="Kremenetskaia I."/>
            <person name="Kurtz D.B."/>
            <person name="Kwan A."/>
            <person name="Lam B."/>
            <person name="Langin-Hooper S."/>
            <person name="Lee A."/>
            <person name="Lee J.M."/>
            <person name="Lenz C.A."/>
            <person name="Li J.H."/>
            <person name="Li Y.-P."/>
            <person name="Lin X."/>
            <person name="Liu S.X."/>
            <person name="Liu Z.A."/>
            <person name="Luros J.S."/>
            <person name="Maiti R."/>
            <person name="Marziali A."/>
            <person name="Militscher J."/>
            <person name="Miranda M."/>
            <person name="Nguyen M."/>
            <person name="Nierman W.C."/>
            <person name="Osborne B.I."/>
            <person name="Pai G."/>
            <person name="Peterson J."/>
            <person name="Pham P.K."/>
            <person name="Rizzo M."/>
            <person name="Rooney T."/>
            <person name="Rowley D."/>
            <person name="Sakano H."/>
            <person name="Salzberg S.L."/>
            <person name="Schwartz J.R."/>
            <person name="Shinn P."/>
            <person name="Southwick A.M."/>
            <person name="Sun H."/>
            <person name="Tallon L.J."/>
            <person name="Tambunga G."/>
            <person name="Toriumi M.J."/>
            <person name="Town C.D."/>
            <person name="Utterback T."/>
            <person name="Van Aken S."/>
            <person name="Vaysberg M."/>
            <person name="Vysotskaia V.S."/>
            <person name="Walker M."/>
            <person name="Wu D."/>
            <person name="Yu G."/>
            <person name="Fraser C.M."/>
            <person name="Venter J.C."/>
            <person name="Davis R.W."/>
        </authorList>
    </citation>
    <scope>NUCLEOTIDE SEQUENCE [LARGE SCALE GENOMIC DNA]</scope>
    <source>
        <strain>cv. Columbia</strain>
    </source>
</reference>
<reference key="2">
    <citation type="journal article" date="2017" name="Plant J.">
        <title>Araport11: a complete reannotation of the Arabidopsis thaliana reference genome.</title>
        <authorList>
            <person name="Cheng C.Y."/>
            <person name="Krishnakumar V."/>
            <person name="Chan A.P."/>
            <person name="Thibaud-Nissen F."/>
            <person name="Schobel S."/>
            <person name="Town C.D."/>
        </authorList>
    </citation>
    <scope>GENOME REANNOTATION</scope>
    <source>
        <strain>cv. Columbia</strain>
    </source>
</reference>
<reference key="3">
    <citation type="submission" date="2006-07" db="EMBL/GenBank/DDBJ databases">
        <title>Large-scale analysis of RIKEN Arabidopsis full-length (RAFL) cDNAs.</title>
        <authorList>
            <person name="Totoki Y."/>
            <person name="Seki M."/>
            <person name="Ishida J."/>
            <person name="Nakajima M."/>
            <person name="Enju A."/>
            <person name="Kamiya A."/>
            <person name="Narusaka M."/>
            <person name="Shin-i T."/>
            <person name="Nakagawa M."/>
            <person name="Sakamoto N."/>
            <person name="Oishi K."/>
            <person name="Kohara Y."/>
            <person name="Kobayashi M."/>
            <person name="Toyoda A."/>
            <person name="Sakaki Y."/>
            <person name="Sakurai T."/>
            <person name="Iida K."/>
            <person name="Akiyama K."/>
            <person name="Satou M."/>
            <person name="Toyoda T."/>
            <person name="Konagaya A."/>
            <person name="Carninci P."/>
            <person name="Kawai J."/>
            <person name="Hayashizaki Y."/>
            <person name="Shinozaki K."/>
        </authorList>
    </citation>
    <scope>NUCLEOTIDE SEQUENCE [LARGE SCALE MRNA] OF 1641-2222 (ISOFORM 1/3)</scope>
    <source>
        <strain>cv. Columbia</strain>
    </source>
</reference>
<reference key="4">
    <citation type="journal article" date="2008" name="J. Mol. Evol.">
        <title>Local patterns of nucleotide polymorphism are highly variable in the selfing species Arabidopsis thaliana.</title>
        <authorList>
            <person name="Moore R.C."/>
            <person name="Stevens M.H.H."/>
        </authorList>
    </citation>
    <scope>NUCLEOTIDE SEQUENCE [GENOMIC DNA] OF 6-154; 549-667 AND 1901-2094 (ISOFORM 1/2/3)</scope>
    <source>
        <strain>cv. Bla-10</strain>
        <strain>cv. Chi-1</strain>
        <strain>cv. Co-1</strain>
        <strain>cv. Columbia</strain>
        <strain>cv. Cvi-0</strain>
        <strain>cv. Da(1)-12</strain>
        <strain>cv. Di-G</strain>
        <strain>cv. Gr-3</strain>
        <strain>cv. Landsberg erecta</strain>
        <strain>cv. Li-3</strain>
        <strain>cv. Mt-0</strain>
        <strain>cv. PHW-1</strain>
        <strain>cv. PHW-32</strain>
        <strain>cv. Sha</strain>
    </source>
</reference>
<reference key="5">
    <citation type="journal article" date="2008" name="J. Proteome Res.">
        <title>Site-specific phosphorylation profiling of Arabidopsis proteins by mass spectrometry and peptide chip analysis.</title>
        <authorList>
            <person name="de la Fuente van Bentem S."/>
            <person name="Anrather D."/>
            <person name="Dohnal I."/>
            <person name="Roitinger E."/>
            <person name="Csaszar E."/>
            <person name="Joore J."/>
            <person name="Buijnink J."/>
            <person name="Carreri A."/>
            <person name="Forzani C."/>
            <person name="Lorkovic Z.J."/>
            <person name="Barta A."/>
            <person name="Lecourieux D."/>
            <person name="Verhounig A."/>
            <person name="Jonak C."/>
            <person name="Hirt H."/>
        </authorList>
    </citation>
    <scope>IDENTIFICATION BY MASS SPECTROMETRY [LARGE SCALE ANALYSIS]</scope>
    <source>
        <tissue>Root</tissue>
    </source>
</reference>
<reference key="6">
    <citation type="journal article" date="2008" name="Plant J.">
        <title>The Arabidopsis sweetie mutant is affected in carbohydrate metabolism and defective in the control of growth, development and senescence.</title>
        <authorList>
            <person name="Veyres N."/>
            <person name="Danon A."/>
            <person name="Aono M."/>
            <person name="Galliot S."/>
            <person name="Karibasappa Y.B."/>
            <person name="Diet A."/>
            <person name="Grandmottet F."/>
            <person name="Tamaoki M."/>
            <person name="Lesur D."/>
            <person name="Pilard S."/>
            <person name="Boitel-Conti M."/>
            <person name="Sangwan-Norreel B.S."/>
            <person name="Sangwan R.S."/>
        </authorList>
    </citation>
    <scope>FUNCTION</scope>
    <scope>DISRUPTION PHENOTYPE</scope>
    <source>
        <strain>cv. C24</strain>
        <strain>cv. Columbia</strain>
    </source>
</reference>
<reference key="7">
    <citation type="journal article" date="2008" name="Plant Signal. Behav.">
        <title>Has Arabidopsis SWEETIE protein a role in sugar flux and utilization?</title>
        <authorList>
            <person name="Veyres N."/>
            <person name="Aono M."/>
            <person name="Sangwan-Norreel B.S."/>
            <person name="Sangwan R.S."/>
        </authorList>
    </citation>
    <scope>FUNCTION</scope>
    <scope>DISRUPTION PHENOTYPE</scope>
</reference>
<keyword id="KW-0025">Alternative splicing</keyword>
<keyword id="KW-0266">Ethylene biosynthesis</keyword>
<keyword id="KW-1185">Reference proteome</keyword>
<keyword id="KW-0677">Repeat</keyword>
<keyword id="KW-0346">Stress response</keyword>
<proteinExistence type="evidence at protein level"/>
<feature type="chain" id="PRO_0000440858" description="Protein SWEETIE">
    <location>
        <begin position="1"/>
        <end position="2222"/>
    </location>
</feature>
<feature type="repeat" description="HEAT 1" evidence="1">
    <location>
        <begin position="37"/>
        <end position="75"/>
    </location>
</feature>
<feature type="repeat" description="HEAT 2" evidence="1">
    <location>
        <begin position="228"/>
        <end position="265"/>
    </location>
</feature>
<feature type="repeat" description="HEAT 3" evidence="1">
    <location>
        <begin position="331"/>
        <end position="368"/>
    </location>
</feature>
<feature type="repeat" description="HEAT 4" evidence="1">
    <location>
        <begin position="510"/>
        <end position="540"/>
    </location>
</feature>
<feature type="repeat" description="HEAT 5" evidence="1">
    <location>
        <begin position="541"/>
        <end position="578"/>
    </location>
</feature>
<feature type="repeat" description="HEAT 6" evidence="1">
    <location>
        <begin position="611"/>
        <end position="648"/>
    </location>
</feature>
<feature type="repeat" description="HEAT 7" evidence="1">
    <location>
        <begin position="768"/>
        <end position="807"/>
    </location>
</feature>
<feature type="repeat" description="HEAT 8" evidence="1">
    <location>
        <begin position="898"/>
        <end position="936"/>
    </location>
</feature>
<feature type="repeat" description="HEAT 9" evidence="1">
    <location>
        <begin position="968"/>
        <end position="1008"/>
    </location>
</feature>
<feature type="repeat" description="HEAT 10" evidence="1">
    <location>
        <begin position="1029"/>
        <end position="1066"/>
    </location>
</feature>
<feature type="repeat" description="HEAT 11" evidence="1">
    <location>
        <begin position="1238"/>
        <end position="1269"/>
    </location>
</feature>
<feature type="repeat" description="HEAT 12" evidence="1">
    <location>
        <begin position="1270"/>
        <end position="1306"/>
    </location>
</feature>
<feature type="repeat" description="HEAT 13" evidence="1">
    <location>
        <begin position="1312"/>
        <end position="1354"/>
    </location>
</feature>
<feature type="repeat" description="HEAT 14" evidence="1">
    <location>
        <begin position="1372"/>
        <end position="1410"/>
    </location>
</feature>
<feature type="repeat" description="HEAT 15" evidence="1">
    <location>
        <begin position="1434"/>
        <end position="1474"/>
    </location>
</feature>
<feature type="repeat" description="HEAT 16" evidence="1">
    <location>
        <begin position="1550"/>
        <end position="1586"/>
    </location>
</feature>
<feature type="repeat" description="HEAT 17" evidence="1">
    <location>
        <begin position="1783"/>
        <end position="1820"/>
    </location>
</feature>
<feature type="repeat" description="HEAT 18" evidence="1">
    <location>
        <begin position="1836"/>
        <end position="1874"/>
    </location>
</feature>
<feature type="repeat" description="HEAT 19" evidence="1">
    <location>
        <begin position="1880"/>
        <end position="1917"/>
    </location>
</feature>
<feature type="repeat" description="HEAT 20" evidence="1">
    <location>
        <begin position="1966"/>
        <end position="2006"/>
    </location>
</feature>
<feature type="region of interest" description="Disordered" evidence="2">
    <location>
        <begin position="1133"/>
        <end position="1165"/>
    </location>
</feature>
<feature type="region of interest" description="Disordered" evidence="2">
    <location>
        <begin position="1992"/>
        <end position="2203"/>
    </location>
</feature>
<feature type="compositionally biased region" description="Polar residues" evidence="2">
    <location>
        <begin position="1996"/>
        <end position="2009"/>
    </location>
</feature>
<feature type="compositionally biased region" description="Acidic residues" evidence="2">
    <location>
        <begin position="2010"/>
        <end position="2027"/>
    </location>
</feature>
<feature type="compositionally biased region" description="Polar residues" evidence="2">
    <location>
        <begin position="2028"/>
        <end position="2040"/>
    </location>
</feature>
<feature type="compositionally biased region" description="Acidic residues" evidence="2">
    <location>
        <begin position="2062"/>
        <end position="2072"/>
    </location>
</feature>
<feature type="compositionally biased region" description="Basic and acidic residues" evidence="2">
    <location>
        <begin position="2073"/>
        <end position="2096"/>
    </location>
</feature>
<feature type="compositionally biased region" description="Basic and acidic residues" evidence="2">
    <location>
        <begin position="2108"/>
        <end position="2124"/>
    </location>
</feature>
<feature type="compositionally biased region" description="Polar residues" evidence="2">
    <location>
        <begin position="2150"/>
        <end position="2164"/>
    </location>
</feature>
<feature type="compositionally biased region" description="Basic and acidic residues" evidence="2">
    <location>
        <begin position="2191"/>
        <end position="2202"/>
    </location>
</feature>
<feature type="splice variant" id="VSP_058998" description="In isoform 2 and isoform 3.">
    <location>
        <position position="1412"/>
    </location>
</feature>
<feature type="splice variant" id="VSP_058999" description="In isoform 2.">
    <original>L</original>
    <variation>LV</variation>
    <location>
        <position position="1847"/>
    </location>
</feature>
<dbReference type="EMBL" id="AC004146">
    <property type="protein sequence ID" value="AAD10656.1"/>
    <property type="status" value="ALT_SEQ"/>
    <property type="molecule type" value="Genomic_DNA"/>
</dbReference>
<dbReference type="EMBL" id="CP002684">
    <property type="protein sequence ID" value="AEE34600.1"/>
    <property type="molecule type" value="Genomic_DNA"/>
</dbReference>
<dbReference type="EMBL" id="CP002684">
    <property type="protein sequence ID" value="AEE34601.2"/>
    <property type="molecule type" value="Genomic_DNA"/>
</dbReference>
<dbReference type="EMBL" id="CP002684">
    <property type="protein sequence ID" value="AEE34602.1"/>
    <property type="molecule type" value="Genomic_DNA"/>
</dbReference>
<dbReference type="EMBL" id="AK229024">
    <property type="protein sequence ID" value="BAF00910.1"/>
    <property type="molecule type" value="mRNA"/>
</dbReference>
<dbReference type="EMBL" id="EU351115">
    <property type="protein sequence ID" value="ABZ04650.1"/>
    <property type="molecule type" value="Genomic_DNA"/>
</dbReference>
<dbReference type="EMBL" id="EU351115">
    <property type="protein sequence ID" value="ABZ04651.1"/>
    <property type="molecule type" value="Genomic_DNA"/>
</dbReference>
<dbReference type="EMBL" id="EU351115">
    <property type="protein sequence ID" value="ABZ04652.1"/>
    <property type="molecule type" value="Genomic_DNA"/>
</dbReference>
<dbReference type="EMBL" id="EU351116">
    <property type="protein sequence ID" value="ABZ04653.1"/>
    <property type="molecule type" value="Genomic_DNA"/>
</dbReference>
<dbReference type="EMBL" id="EU351116">
    <property type="protein sequence ID" value="ABZ04654.1"/>
    <property type="molecule type" value="Genomic_DNA"/>
</dbReference>
<dbReference type="EMBL" id="EU351116">
    <property type="protein sequence ID" value="ABZ04655.1"/>
    <property type="molecule type" value="Genomic_DNA"/>
</dbReference>
<dbReference type="EMBL" id="EU351117">
    <property type="protein sequence ID" value="ABZ04656.1"/>
    <property type="molecule type" value="Genomic_DNA"/>
</dbReference>
<dbReference type="EMBL" id="EU351117">
    <property type="protein sequence ID" value="ABZ04657.1"/>
    <property type="molecule type" value="Genomic_DNA"/>
</dbReference>
<dbReference type="EMBL" id="EU351118">
    <property type="protein sequence ID" value="ABZ04659.1"/>
    <property type="molecule type" value="Genomic_DNA"/>
</dbReference>
<dbReference type="EMBL" id="EU351118">
    <property type="protein sequence ID" value="ABZ04660.1"/>
    <property type="molecule type" value="Genomic_DNA"/>
</dbReference>
<dbReference type="EMBL" id="EU351118">
    <property type="protein sequence ID" value="ABZ04661.1"/>
    <property type="molecule type" value="Genomic_DNA"/>
</dbReference>
<dbReference type="EMBL" id="EU351119">
    <property type="protein sequence ID" value="ABZ04662.1"/>
    <property type="molecule type" value="Genomic_DNA"/>
</dbReference>
<dbReference type="EMBL" id="EU351119">
    <property type="protein sequence ID" value="ABZ04663.1"/>
    <property type="molecule type" value="Genomic_DNA"/>
</dbReference>
<dbReference type="EMBL" id="EU351120">
    <property type="protein sequence ID" value="ABZ04665.1"/>
    <property type="molecule type" value="Genomic_DNA"/>
</dbReference>
<dbReference type="EMBL" id="EU351120">
    <property type="protein sequence ID" value="ABZ04666.1"/>
    <property type="molecule type" value="Genomic_DNA"/>
</dbReference>
<dbReference type="EMBL" id="EU351121">
    <property type="protein sequence ID" value="ABZ04668.1"/>
    <property type="molecule type" value="Genomic_DNA"/>
</dbReference>
<dbReference type="EMBL" id="EU351121">
    <property type="protein sequence ID" value="ABZ04669.1"/>
    <property type="molecule type" value="Genomic_DNA"/>
</dbReference>
<dbReference type="EMBL" id="EU351122">
    <property type="protein sequence ID" value="ABZ04671.1"/>
    <property type="molecule type" value="Genomic_DNA"/>
</dbReference>
<dbReference type="EMBL" id="EU351122">
    <property type="protein sequence ID" value="ABZ04672.1"/>
    <property type="molecule type" value="Genomic_DNA"/>
</dbReference>
<dbReference type="EMBL" id="EU351123">
    <property type="protein sequence ID" value="ABZ04674.1"/>
    <property type="molecule type" value="Genomic_DNA"/>
</dbReference>
<dbReference type="EMBL" id="EU351123">
    <property type="protein sequence ID" value="ABZ04675.1"/>
    <property type="molecule type" value="Genomic_DNA"/>
</dbReference>
<dbReference type="EMBL" id="EU351124">
    <property type="protein sequence ID" value="ABZ04677.1"/>
    <property type="molecule type" value="Genomic_DNA"/>
</dbReference>
<dbReference type="EMBL" id="EU351124">
    <property type="protein sequence ID" value="ABZ04678.1"/>
    <property type="molecule type" value="Genomic_DNA"/>
</dbReference>
<dbReference type="EMBL" id="EU351125">
    <property type="protein sequence ID" value="ABZ04680.1"/>
    <property type="molecule type" value="Genomic_DNA"/>
</dbReference>
<dbReference type="EMBL" id="EU351125">
    <property type="protein sequence ID" value="ABZ04681.1"/>
    <property type="molecule type" value="Genomic_DNA"/>
</dbReference>
<dbReference type="EMBL" id="EU351126">
    <property type="protein sequence ID" value="ABZ04683.1"/>
    <property type="molecule type" value="Genomic_DNA"/>
</dbReference>
<dbReference type="EMBL" id="EU351126">
    <property type="protein sequence ID" value="ABZ04684.1"/>
    <property type="molecule type" value="Genomic_DNA"/>
</dbReference>
<dbReference type="EMBL" id="EU351126">
    <property type="protein sequence ID" value="ABZ04685.1"/>
    <property type="molecule type" value="Genomic_DNA"/>
</dbReference>
<dbReference type="EMBL" id="EU351127">
    <property type="protein sequence ID" value="ABZ04686.1"/>
    <property type="molecule type" value="Genomic_DNA"/>
</dbReference>
<dbReference type="EMBL" id="EU351127">
    <property type="protein sequence ID" value="ABZ04687.1"/>
    <property type="molecule type" value="Genomic_DNA"/>
</dbReference>
<dbReference type="EMBL" id="EU351128">
    <property type="protein sequence ID" value="ABZ04689.1"/>
    <property type="molecule type" value="Genomic_DNA"/>
</dbReference>
<dbReference type="EMBL" id="EU351128">
    <property type="protein sequence ID" value="ABZ04690.1"/>
    <property type="molecule type" value="Genomic_DNA"/>
</dbReference>
<dbReference type="PIR" id="C96695">
    <property type="entry name" value="C96695"/>
</dbReference>
<dbReference type="RefSeq" id="NP_001185337.1">
    <molecule id="F4HRS2-2"/>
    <property type="nucleotide sequence ID" value="NM_001198408.1"/>
</dbReference>
<dbReference type="RefSeq" id="NP_001319331.1">
    <molecule id="F4HRS2-1"/>
    <property type="nucleotide sequence ID" value="NM_001334274.1"/>
</dbReference>
<dbReference type="RefSeq" id="NP_176885.7">
    <molecule id="F4HRS2-3"/>
    <property type="nucleotide sequence ID" value="NM_105384.8"/>
</dbReference>
<dbReference type="FunCoup" id="F4HRS2">
    <property type="interactions" value="3855"/>
</dbReference>
<dbReference type="STRING" id="3702.F4HRS2"/>
<dbReference type="GlyGen" id="F4HRS2">
    <property type="glycosylation" value="1 site"/>
</dbReference>
<dbReference type="iPTMnet" id="F4HRS2"/>
<dbReference type="MetOSite" id="F4HRS2"/>
<dbReference type="PaxDb" id="3702-AT1G67140.3"/>
<dbReference type="ProteomicsDB" id="226769">
    <molecule id="F4HRS2-1"/>
</dbReference>
<dbReference type="EnsemblPlants" id="AT1G67140.1">
    <molecule id="F4HRS2-3"/>
    <property type="protein sequence ID" value="AT1G67140.1"/>
    <property type="gene ID" value="AT1G67140"/>
</dbReference>
<dbReference type="EnsemblPlants" id="AT1G67140.2">
    <molecule id="F4HRS2-2"/>
    <property type="protein sequence ID" value="AT1G67140.2"/>
    <property type="gene ID" value="AT1G67140"/>
</dbReference>
<dbReference type="EnsemblPlants" id="AT1G67140.3">
    <molecule id="F4HRS2-1"/>
    <property type="protein sequence ID" value="AT1G67140.3"/>
    <property type="gene ID" value="AT1G67140"/>
</dbReference>
<dbReference type="GeneID" id="843034"/>
<dbReference type="Gramene" id="AT1G67140.1">
    <molecule id="F4HRS2-3"/>
    <property type="protein sequence ID" value="AT1G67140.1"/>
    <property type="gene ID" value="AT1G67140"/>
</dbReference>
<dbReference type="Gramene" id="AT1G67140.2">
    <molecule id="F4HRS2-2"/>
    <property type="protein sequence ID" value="AT1G67140.2"/>
    <property type="gene ID" value="AT1G67140"/>
</dbReference>
<dbReference type="Gramene" id="AT1G67140.3">
    <molecule id="F4HRS2-1"/>
    <property type="protein sequence ID" value="AT1G67140.3"/>
    <property type="gene ID" value="AT1G67140"/>
</dbReference>
<dbReference type="KEGG" id="ath:AT1G67140"/>
<dbReference type="Araport" id="AT1G67140"/>
<dbReference type="TAIR" id="AT1G67140">
    <property type="gene designation" value="SWEETIE"/>
</dbReference>
<dbReference type="eggNOG" id="KOG1822">
    <property type="taxonomic scope" value="Eukaryota"/>
</dbReference>
<dbReference type="InParanoid" id="F4HRS2"/>
<dbReference type="OMA" id="YPQVIQE"/>
<dbReference type="OrthoDB" id="192608at2759"/>
<dbReference type="PRO" id="PR:F4HRS2"/>
<dbReference type="Proteomes" id="UP000006548">
    <property type="component" value="Chromosome 1"/>
</dbReference>
<dbReference type="ExpressionAtlas" id="F4HRS2">
    <property type="expression patterns" value="baseline and differential"/>
</dbReference>
<dbReference type="GO" id="GO:0005975">
    <property type="term" value="P:carbohydrate metabolic process"/>
    <property type="evidence" value="ECO:0000315"/>
    <property type="project" value="TAIR"/>
</dbReference>
<dbReference type="GO" id="GO:0009693">
    <property type="term" value="P:ethylene biosynthetic process"/>
    <property type="evidence" value="ECO:0007669"/>
    <property type="project" value="UniProtKB-KW"/>
</dbReference>
<dbReference type="GO" id="GO:0010364">
    <property type="term" value="P:regulation of ethylene biosynthetic process"/>
    <property type="evidence" value="ECO:0000315"/>
    <property type="project" value="UniProtKB"/>
</dbReference>
<dbReference type="GO" id="GO:1900055">
    <property type="term" value="P:regulation of leaf senescence"/>
    <property type="evidence" value="ECO:0000315"/>
    <property type="project" value="UniProtKB"/>
</dbReference>
<dbReference type="GO" id="GO:0005982">
    <property type="term" value="P:starch metabolic process"/>
    <property type="evidence" value="ECO:0000315"/>
    <property type="project" value="TAIR"/>
</dbReference>
<dbReference type="GO" id="GO:0005991">
    <property type="term" value="P:trehalose metabolic process"/>
    <property type="evidence" value="ECO:0000315"/>
    <property type="project" value="TAIR"/>
</dbReference>
<dbReference type="FunFam" id="1.25.10.10:FF:001170">
    <property type="entry name" value="Protein SWEETIE"/>
    <property type="match status" value="1"/>
</dbReference>
<dbReference type="Gene3D" id="1.25.10.10">
    <property type="entry name" value="Leucine-rich Repeat Variant"/>
    <property type="match status" value="1"/>
</dbReference>
<dbReference type="InterPro" id="IPR011989">
    <property type="entry name" value="ARM-like"/>
</dbReference>
<dbReference type="InterPro" id="IPR016024">
    <property type="entry name" value="ARM-type_fold"/>
</dbReference>
<dbReference type="InterPro" id="IPR046837">
    <property type="entry name" value="Laa1/Sip1/HEATR5-like_HEAT"/>
</dbReference>
<dbReference type="InterPro" id="IPR044218">
    <property type="entry name" value="SWEETIE"/>
</dbReference>
<dbReference type="PANTHER" id="PTHR46975">
    <property type="entry name" value="PROTEIN SWEETIE"/>
    <property type="match status" value="1"/>
</dbReference>
<dbReference type="PANTHER" id="PTHR46975:SF2">
    <property type="entry name" value="PROTEIN SWEETIE"/>
    <property type="match status" value="1"/>
</dbReference>
<dbReference type="Pfam" id="PF20210">
    <property type="entry name" value="Laa1_Sip1_HTR5"/>
    <property type="match status" value="1"/>
</dbReference>
<dbReference type="SUPFAM" id="SSF48371">
    <property type="entry name" value="ARM repeat"/>
    <property type="match status" value="3"/>
</dbReference>
<accession>F4HRS2</accession>
<accession>B0ZC48</accession>
<accession>B0ZC49</accession>
<accession>B0ZC50</accession>
<accession>F4HRS0</accession>
<accession>F4HRS1</accession>
<accession>Q0WPN9</accession>
<accession>Q9ZW93</accession>